<dbReference type="EMBL" id="CR628336">
    <property type="protein sequence ID" value="CAH11544.1"/>
    <property type="molecule type" value="Genomic_DNA"/>
</dbReference>
<dbReference type="RefSeq" id="WP_011213009.1">
    <property type="nucleotide sequence ID" value="NC_006368.1"/>
</dbReference>
<dbReference type="SMR" id="Q5X857"/>
<dbReference type="GeneID" id="57034334"/>
<dbReference type="KEGG" id="lpp:lpp0396"/>
<dbReference type="LegioList" id="lpp0396"/>
<dbReference type="HOGENOM" id="CLU_037562_3_1_6"/>
<dbReference type="GO" id="GO:1990904">
    <property type="term" value="C:ribonucleoprotein complex"/>
    <property type="evidence" value="ECO:0007669"/>
    <property type="project" value="UniProtKB-KW"/>
</dbReference>
<dbReference type="GO" id="GO:0005840">
    <property type="term" value="C:ribosome"/>
    <property type="evidence" value="ECO:0007669"/>
    <property type="project" value="UniProtKB-KW"/>
</dbReference>
<dbReference type="GO" id="GO:0019843">
    <property type="term" value="F:rRNA binding"/>
    <property type="evidence" value="ECO:0007669"/>
    <property type="project" value="UniProtKB-UniRule"/>
</dbReference>
<dbReference type="GO" id="GO:0003735">
    <property type="term" value="F:structural constituent of ribosome"/>
    <property type="evidence" value="ECO:0007669"/>
    <property type="project" value="InterPro"/>
</dbReference>
<dbReference type="GO" id="GO:0006412">
    <property type="term" value="P:translation"/>
    <property type="evidence" value="ECO:0007669"/>
    <property type="project" value="UniProtKB-UniRule"/>
</dbReference>
<dbReference type="FunFam" id="3.30.70.330:FF:000001">
    <property type="entry name" value="50S ribosomal protein L23"/>
    <property type="match status" value="1"/>
</dbReference>
<dbReference type="Gene3D" id="3.30.70.330">
    <property type="match status" value="1"/>
</dbReference>
<dbReference type="HAMAP" id="MF_01369_B">
    <property type="entry name" value="Ribosomal_uL23_B"/>
    <property type="match status" value="1"/>
</dbReference>
<dbReference type="InterPro" id="IPR012677">
    <property type="entry name" value="Nucleotide-bd_a/b_plait_sf"/>
</dbReference>
<dbReference type="InterPro" id="IPR013025">
    <property type="entry name" value="Ribosomal_uL23-like"/>
</dbReference>
<dbReference type="InterPro" id="IPR012678">
    <property type="entry name" value="Ribosomal_uL23/eL15/eS24_sf"/>
</dbReference>
<dbReference type="NCBIfam" id="NF004359">
    <property type="entry name" value="PRK05738.1-3"/>
    <property type="match status" value="1"/>
</dbReference>
<dbReference type="NCBIfam" id="NF004363">
    <property type="entry name" value="PRK05738.2-4"/>
    <property type="match status" value="1"/>
</dbReference>
<dbReference type="PANTHER" id="PTHR11620">
    <property type="entry name" value="60S RIBOSOMAL PROTEIN L23A"/>
    <property type="match status" value="1"/>
</dbReference>
<dbReference type="Pfam" id="PF00276">
    <property type="entry name" value="Ribosomal_L23"/>
    <property type="match status" value="1"/>
</dbReference>
<dbReference type="SUPFAM" id="SSF54189">
    <property type="entry name" value="Ribosomal proteins S24e, L23 and L15e"/>
    <property type="match status" value="1"/>
</dbReference>
<sequence>MNAERLMMVLREPHTSEKATVMADKFKQFTFKVLKNATKTEIKLAVEHIFNVKVKSVSVVNVKGKSKRFKQTSGKRSDWKKAFVSLHADQDIDFTVTE</sequence>
<proteinExistence type="inferred from homology"/>
<keyword id="KW-0687">Ribonucleoprotein</keyword>
<keyword id="KW-0689">Ribosomal protein</keyword>
<keyword id="KW-0694">RNA-binding</keyword>
<keyword id="KW-0699">rRNA-binding</keyword>
<name>RL23_LEGPA</name>
<comment type="function">
    <text evidence="1">One of the early assembly proteins it binds 23S rRNA. One of the proteins that surrounds the polypeptide exit tunnel on the outside of the ribosome. Forms the main docking site for trigger factor binding to the ribosome.</text>
</comment>
<comment type="subunit">
    <text evidence="1">Part of the 50S ribosomal subunit. Contacts protein L29, and trigger factor when it is bound to the ribosome.</text>
</comment>
<comment type="similarity">
    <text evidence="1">Belongs to the universal ribosomal protein uL23 family.</text>
</comment>
<evidence type="ECO:0000255" key="1">
    <source>
        <dbReference type="HAMAP-Rule" id="MF_01369"/>
    </source>
</evidence>
<evidence type="ECO:0000305" key="2"/>
<reference key="1">
    <citation type="journal article" date="2004" name="Nat. Genet.">
        <title>Evidence in the Legionella pneumophila genome for exploitation of host cell functions and high genome plasticity.</title>
        <authorList>
            <person name="Cazalet C."/>
            <person name="Rusniok C."/>
            <person name="Brueggemann H."/>
            <person name="Zidane N."/>
            <person name="Magnier A."/>
            <person name="Ma L."/>
            <person name="Tichit M."/>
            <person name="Jarraud S."/>
            <person name="Bouchier C."/>
            <person name="Vandenesch F."/>
            <person name="Kunst F."/>
            <person name="Etienne J."/>
            <person name="Glaser P."/>
            <person name="Buchrieser C."/>
        </authorList>
    </citation>
    <scope>NUCLEOTIDE SEQUENCE [LARGE SCALE GENOMIC DNA]</scope>
    <source>
        <strain>Paris</strain>
    </source>
</reference>
<protein>
    <recommendedName>
        <fullName evidence="1">Large ribosomal subunit protein uL23</fullName>
    </recommendedName>
    <alternativeName>
        <fullName evidence="2">50S ribosomal protein L23</fullName>
    </alternativeName>
</protein>
<accession>Q5X857</accession>
<feature type="chain" id="PRO_0000272765" description="Large ribosomal subunit protein uL23">
    <location>
        <begin position="1"/>
        <end position="98"/>
    </location>
</feature>
<gene>
    <name evidence="1" type="primary">rplW</name>
    <name type="ordered locus">lpp0396</name>
</gene>
<organism>
    <name type="scientific">Legionella pneumophila (strain Paris)</name>
    <dbReference type="NCBI Taxonomy" id="297246"/>
    <lineage>
        <taxon>Bacteria</taxon>
        <taxon>Pseudomonadati</taxon>
        <taxon>Pseudomonadota</taxon>
        <taxon>Gammaproteobacteria</taxon>
        <taxon>Legionellales</taxon>
        <taxon>Legionellaceae</taxon>
        <taxon>Legionella</taxon>
    </lineage>
</organism>